<protein>
    <recommendedName>
        <fullName evidence="1">Sulfite reductase [NADPH] hemoprotein beta-component</fullName>
        <shortName evidence="1">SiR-HP</shortName>
        <shortName evidence="1">SiRHP</shortName>
        <ecNumber evidence="1">1.8.1.2</ecNumber>
    </recommendedName>
</protein>
<gene>
    <name evidence="1" type="primary">cysI</name>
    <name type="ordered locus">SEN2786</name>
</gene>
<organism>
    <name type="scientific">Salmonella enteritidis PT4 (strain P125109)</name>
    <dbReference type="NCBI Taxonomy" id="550537"/>
    <lineage>
        <taxon>Bacteria</taxon>
        <taxon>Pseudomonadati</taxon>
        <taxon>Pseudomonadota</taxon>
        <taxon>Gammaproteobacteria</taxon>
        <taxon>Enterobacterales</taxon>
        <taxon>Enterobacteriaceae</taxon>
        <taxon>Salmonella</taxon>
    </lineage>
</organism>
<accession>B5QW35</accession>
<name>CYSI_SALEP</name>
<keyword id="KW-0004">4Fe-4S</keyword>
<keyword id="KW-0028">Amino-acid biosynthesis</keyword>
<keyword id="KW-0198">Cysteine biosynthesis</keyword>
<keyword id="KW-0349">Heme</keyword>
<keyword id="KW-0408">Iron</keyword>
<keyword id="KW-0411">Iron-sulfur</keyword>
<keyword id="KW-0479">Metal-binding</keyword>
<keyword id="KW-0521">NADP</keyword>
<keyword id="KW-0560">Oxidoreductase</keyword>
<comment type="function">
    <text evidence="1">Component of the sulfite reductase complex that catalyzes the 6-electron reduction of sulfite to sulfide. This is one of several activities required for the biosynthesis of L-cysteine from sulfate.</text>
</comment>
<comment type="catalytic activity">
    <reaction evidence="1">
        <text>hydrogen sulfide + 3 NADP(+) + 3 H2O = sulfite + 3 NADPH + 4 H(+)</text>
        <dbReference type="Rhea" id="RHEA:13801"/>
        <dbReference type="ChEBI" id="CHEBI:15377"/>
        <dbReference type="ChEBI" id="CHEBI:15378"/>
        <dbReference type="ChEBI" id="CHEBI:17359"/>
        <dbReference type="ChEBI" id="CHEBI:29919"/>
        <dbReference type="ChEBI" id="CHEBI:57783"/>
        <dbReference type="ChEBI" id="CHEBI:58349"/>
        <dbReference type="EC" id="1.8.1.2"/>
    </reaction>
</comment>
<comment type="cofactor">
    <cofactor evidence="1">
        <name>siroheme</name>
        <dbReference type="ChEBI" id="CHEBI:60052"/>
    </cofactor>
    <text evidence="1">Binds 1 siroheme per subunit.</text>
</comment>
<comment type="cofactor">
    <cofactor evidence="1">
        <name>[4Fe-4S] cluster</name>
        <dbReference type="ChEBI" id="CHEBI:49883"/>
    </cofactor>
    <text evidence="1">Binds 1 [4Fe-4S] cluster per subunit.</text>
</comment>
<comment type="pathway">
    <text evidence="1">Sulfur metabolism; hydrogen sulfide biosynthesis; hydrogen sulfide from sulfite (NADPH route): step 1/1.</text>
</comment>
<comment type="subunit">
    <text evidence="1">Alpha(8)-beta(8). The alpha component is a flavoprotein, the beta component is a hemoprotein.</text>
</comment>
<comment type="similarity">
    <text evidence="1">Belongs to the nitrite and sulfite reductase 4Fe-4S domain family.</text>
</comment>
<dbReference type="EC" id="1.8.1.2" evidence="1"/>
<dbReference type="EMBL" id="AM933172">
    <property type="protein sequence ID" value="CAR34365.1"/>
    <property type="molecule type" value="Genomic_DNA"/>
</dbReference>
<dbReference type="RefSeq" id="WP_001290670.1">
    <property type="nucleotide sequence ID" value="NC_011294.1"/>
</dbReference>
<dbReference type="SMR" id="B5QW35"/>
<dbReference type="KEGG" id="set:SEN2786"/>
<dbReference type="HOGENOM" id="CLU_001975_3_2_6"/>
<dbReference type="UniPathway" id="UPA00140">
    <property type="reaction ID" value="UER00207"/>
</dbReference>
<dbReference type="Proteomes" id="UP000000613">
    <property type="component" value="Chromosome"/>
</dbReference>
<dbReference type="GO" id="GO:0009337">
    <property type="term" value="C:sulfite reductase complex (NADPH)"/>
    <property type="evidence" value="ECO:0007669"/>
    <property type="project" value="InterPro"/>
</dbReference>
<dbReference type="GO" id="GO:0051539">
    <property type="term" value="F:4 iron, 4 sulfur cluster binding"/>
    <property type="evidence" value="ECO:0007669"/>
    <property type="project" value="UniProtKB-KW"/>
</dbReference>
<dbReference type="GO" id="GO:0020037">
    <property type="term" value="F:heme binding"/>
    <property type="evidence" value="ECO:0007669"/>
    <property type="project" value="InterPro"/>
</dbReference>
<dbReference type="GO" id="GO:0046872">
    <property type="term" value="F:metal ion binding"/>
    <property type="evidence" value="ECO:0007669"/>
    <property type="project" value="UniProtKB-KW"/>
</dbReference>
<dbReference type="GO" id="GO:0050661">
    <property type="term" value="F:NADP binding"/>
    <property type="evidence" value="ECO:0007669"/>
    <property type="project" value="InterPro"/>
</dbReference>
<dbReference type="GO" id="GO:0050311">
    <property type="term" value="F:sulfite reductase (ferredoxin) activity"/>
    <property type="evidence" value="ECO:0007669"/>
    <property type="project" value="TreeGrafter"/>
</dbReference>
<dbReference type="GO" id="GO:0004783">
    <property type="term" value="F:sulfite reductase (NADPH) activity"/>
    <property type="evidence" value="ECO:0007669"/>
    <property type="project" value="UniProtKB-UniRule"/>
</dbReference>
<dbReference type="GO" id="GO:0019344">
    <property type="term" value="P:cysteine biosynthetic process"/>
    <property type="evidence" value="ECO:0007669"/>
    <property type="project" value="UniProtKB-KW"/>
</dbReference>
<dbReference type="GO" id="GO:0070814">
    <property type="term" value="P:hydrogen sulfide biosynthetic process"/>
    <property type="evidence" value="ECO:0007669"/>
    <property type="project" value="UniProtKB-UniRule"/>
</dbReference>
<dbReference type="GO" id="GO:0000103">
    <property type="term" value="P:sulfate assimilation"/>
    <property type="evidence" value="ECO:0007669"/>
    <property type="project" value="UniProtKB-UniRule"/>
</dbReference>
<dbReference type="FunFam" id="3.30.413.10:FF:000003">
    <property type="entry name" value="Sulfite reductase [NADPH] hemoprotein beta-component"/>
    <property type="match status" value="1"/>
</dbReference>
<dbReference type="FunFam" id="3.30.413.10:FF:000004">
    <property type="entry name" value="Sulfite reductase [NADPH] hemoprotein beta-component"/>
    <property type="match status" value="1"/>
</dbReference>
<dbReference type="Gene3D" id="3.30.413.10">
    <property type="entry name" value="Sulfite Reductase Hemoprotein, domain 1"/>
    <property type="match status" value="2"/>
</dbReference>
<dbReference type="HAMAP" id="MF_01540">
    <property type="entry name" value="CysI"/>
    <property type="match status" value="1"/>
</dbReference>
<dbReference type="InterPro" id="IPR011786">
    <property type="entry name" value="CysI"/>
</dbReference>
<dbReference type="InterPro" id="IPR005117">
    <property type="entry name" value="NiRdtase/SiRdtase_haem-b_fer"/>
</dbReference>
<dbReference type="InterPro" id="IPR036136">
    <property type="entry name" value="Nit/Sulf_reduc_fer-like_dom_sf"/>
</dbReference>
<dbReference type="InterPro" id="IPR006067">
    <property type="entry name" value="NO2/SO3_Rdtase_4Fe4S_dom"/>
</dbReference>
<dbReference type="InterPro" id="IPR045169">
    <property type="entry name" value="NO2/SO3_Rdtase_4Fe4S_prot"/>
</dbReference>
<dbReference type="InterPro" id="IPR045854">
    <property type="entry name" value="NO2/SO3_Rdtase_4Fe4S_sf"/>
</dbReference>
<dbReference type="InterPro" id="IPR006066">
    <property type="entry name" value="NO2/SO3_Rdtase_FeS/sirohaem_BS"/>
</dbReference>
<dbReference type="NCBIfam" id="TIGR02041">
    <property type="entry name" value="CysI"/>
    <property type="match status" value="1"/>
</dbReference>
<dbReference type="NCBIfam" id="NF010029">
    <property type="entry name" value="PRK13504.1"/>
    <property type="match status" value="1"/>
</dbReference>
<dbReference type="PANTHER" id="PTHR11493:SF47">
    <property type="entry name" value="SULFITE REDUCTASE [NADPH] SUBUNIT BETA"/>
    <property type="match status" value="1"/>
</dbReference>
<dbReference type="PANTHER" id="PTHR11493">
    <property type="entry name" value="SULFITE REDUCTASE [NADPH] SUBUNIT BETA-RELATED"/>
    <property type="match status" value="1"/>
</dbReference>
<dbReference type="Pfam" id="PF01077">
    <property type="entry name" value="NIR_SIR"/>
    <property type="match status" value="1"/>
</dbReference>
<dbReference type="Pfam" id="PF03460">
    <property type="entry name" value="NIR_SIR_ferr"/>
    <property type="match status" value="2"/>
</dbReference>
<dbReference type="PRINTS" id="PR00397">
    <property type="entry name" value="SIROHAEM"/>
</dbReference>
<dbReference type="SUPFAM" id="SSF56014">
    <property type="entry name" value="Nitrite and sulphite reductase 4Fe-4S domain-like"/>
    <property type="match status" value="2"/>
</dbReference>
<dbReference type="SUPFAM" id="SSF55124">
    <property type="entry name" value="Nitrite/Sulfite reductase N-terminal domain-like"/>
    <property type="match status" value="2"/>
</dbReference>
<dbReference type="PROSITE" id="PS00365">
    <property type="entry name" value="NIR_SIR"/>
    <property type="match status" value="1"/>
</dbReference>
<evidence type="ECO:0000255" key="1">
    <source>
        <dbReference type="HAMAP-Rule" id="MF_01540"/>
    </source>
</evidence>
<proteinExistence type="inferred from homology"/>
<sequence>MSEKHPGPLVVEGKLSDAERMKLESNYLRGTIAEDLNDGLTGGFKGDNFLLIRFHGMYQQDDRDIRAERAEQKLEPRHAMLLRCRLPGGVITTTQWQAIDKFAADNTIYGSIRLTNRQTFQFHGILKKNVKPVHQMLHSVGLDALATANDMNRNVLCTSNPYESQLHAEAYEWAKKISEHLLPRTRAYAEIWLDQEKVAITDEEPILGQTYLPRKFKTTVVIPPQNDIDLHANDMNFVAIAENGKLVGFNLLVGGGLSIEHGNKKTYARTASEFGYLPLEHTLAVAEAVVTTQRDWGNRTDRKNAKTKYTLERVGLETFKAEVERRAGIKFEPIRPYEFTGRGDRIGWVKGIDNNWHLTLFIENGRILDYPGRPLKTGLLEIAKIHQGEFRITANQNLIIASVPESQKAKIETLARDHGLMNAVSAQRENSMACVSFPTCPLAMAEAERFLPSFTDKVEAILEKHGIPDEHIVMRVTGCPNGCGRAMLAEIGLVGKAPGRYNLHLGGNRIGTRIPRMYQENITEPDILASLDELIGRWAKEREAGEGFGDFTVRAGIIRPVLDPARDFWE</sequence>
<reference key="1">
    <citation type="journal article" date="2008" name="Genome Res.">
        <title>Comparative genome analysis of Salmonella enteritidis PT4 and Salmonella gallinarum 287/91 provides insights into evolutionary and host adaptation pathways.</title>
        <authorList>
            <person name="Thomson N.R."/>
            <person name="Clayton D.J."/>
            <person name="Windhorst D."/>
            <person name="Vernikos G."/>
            <person name="Davidson S."/>
            <person name="Churcher C."/>
            <person name="Quail M.A."/>
            <person name="Stevens M."/>
            <person name="Jones M.A."/>
            <person name="Watson M."/>
            <person name="Barron A."/>
            <person name="Layton A."/>
            <person name="Pickard D."/>
            <person name="Kingsley R.A."/>
            <person name="Bignell A."/>
            <person name="Clark L."/>
            <person name="Harris B."/>
            <person name="Ormond D."/>
            <person name="Abdellah Z."/>
            <person name="Brooks K."/>
            <person name="Cherevach I."/>
            <person name="Chillingworth T."/>
            <person name="Woodward J."/>
            <person name="Norberczak H."/>
            <person name="Lord A."/>
            <person name="Arrowsmith C."/>
            <person name="Jagels K."/>
            <person name="Moule S."/>
            <person name="Mungall K."/>
            <person name="Saunders M."/>
            <person name="Whitehead S."/>
            <person name="Chabalgoity J.A."/>
            <person name="Maskell D."/>
            <person name="Humphreys T."/>
            <person name="Roberts M."/>
            <person name="Barrow P.A."/>
            <person name="Dougan G."/>
            <person name="Parkhill J."/>
        </authorList>
    </citation>
    <scope>NUCLEOTIDE SEQUENCE [LARGE SCALE GENOMIC DNA]</scope>
    <source>
        <strain>P125109</strain>
    </source>
</reference>
<feature type="chain" id="PRO_1000146655" description="Sulfite reductase [NADPH] hemoprotein beta-component">
    <location>
        <begin position="1"/>
        <end position="570"/>
    </location>
</feature>
<feature type="binding site" evidence="1">
    <location>
        <position position="434"/>
    </location>
    <ligand>
        <name>[4Fe-4S] cluster</name>
        <dbReference type="ChEBI" id="CHEBI:49883"/>
    </ligand>
</feature>
<feature type="binding site" evidence="1">
    <location>
        <position position="440"/>
    </location>
    <ligand>
        <name>[4Fe-4S] cluster</name>
        <dbReference type="ChEBI" id="CHEBI:49883"/>
    </ligand>
</feature>
<feature type="binding site" evidence="1">
    <location>
        <position position="479"/>
    </location>
    <ligand>
        <name>[4Fe-4S] cluster</name>
        <dbReference type="ChEBI" id="CHEBI:49883"/>
    </ligand>
</feature>
<feature type="binding site" evidence="1">
    <location>
        <position position="483"/>
    </location>
    <ligand>
        <name>[4Fe-4S] cluster</name>
        <dbReference type="ChEBI" id="CHEBI:49883"/>
    </ligand>
</feature>
<feature type="binding site" description="axial binding residue" evidence="1">
    <location>
        <position position="483"/>
    </location>
    <ligand>
        <name>siroheme</name>
        <dbReference type="ChEBI" id="CHEBI:60052"/>
    </ligand>
    <ligandPart>
        <name>Fe</name>
        <dbReference type="ChEBI" id="CHEBI:18248"/>
    </ligandPart>
</feature>